<feature type="chain" id="PRO_0000085388" description="Protein Tat">
    <location>
        <begin position="1"/>
        <end position="100"/>
    </location>
</feature>
<feature type="region of interest" description="Transactivation" evidence="1">
    <location>
        <begin position="1"/>
        <end position="48"/>
    </location>
</feature>
<feature type="region of interest" description="Interaction with human CREBBP" evidence="1">
    <location>
        <begin position="1"/>
        <end position="24"/>
    </location>
</feature>
<feature type="region of interest" description="Cysteine-rich" evidence="1">
    <location>
        <begin position="22"/>
        <end position="37"/>
    </location>
</feature>
<feature type="region of interest" description="Core" evidence="1">
    <location>
        <begin position="38"/>
        <end position="48"/>
    </location>
</feature>
<feature type="region of interest" description="Disordered" evidence="2">
    <location>
        <begin position="48"/>
        <end position="100"/>
    </location>
</feature>
<feature type="region of interest" description="Interaction with the host capping enzyme RNGTT" evidence="1">
    <location>
        <begin position="49"/>
        <end position="87"/>
    </location>
</feature>
<feature type="short sequence motif" description="Nuclear localization signal, RNA-binding (TAR), and protein transduction" evidence="1">
    <location>
        <begin position="49"/>
        <end position="57"/>
    </location>
</feature>
<feature type="compositionally biased region" description="Basic residues" evidence="2">
    <location>
        <begin position="48"/>
        <end position="58"/>
    </location>
</feature>
<feature type="compositionally biased region" description="Polar residues" evidence="2">
    <location>
        <begin position="63"/>
        <end position="79"/>
    </location>
</feature>
<feature type="compositionally biased region" description="Basic and acidic residues" evidence="2">
    <location>
        <begin position="80"/>
        <end position="100"/>
    </location>
</feature>
<feature type="binding site" evidence="1">
    <location>
        <position position="22"/>
    </location>
    <ligand>
        <name>Zn(2+)</name>
        <dbReference type="ChEBI" id="CHEBI:29105"/>
        <label>1</label>
    </ligand>
</feature>
<feature type="binding site" evidence="1">
    <location>
        <position position="25"/>
    </location>
    <ligand>
        <name>Zn(2+)</name>
        <dbReference type="ChEBI" id="CHEBI:29105"/>
        <label>2</label>
    </ligand>
</feature>
<feature type="binding site" evidence="1">
    <location>
        <position position="27"/>
    </location>
    <ligand>
        <name>Zn(2+)</name>
        <dbReference type="ChEBI" id="CHEBI:29105"/>
        <label>2</label>
    </ligand>
</feature>
<feature type="binding site" evidence="1">
    <location>
        <position position="30"/>
    </location>
    <ligand>
        <name>Zn(2+)</name>
        <dbReference type="ChEBI" id="CHEBI:29105"/>
        <label>2</label>
    </ligand>
</feature>
<feature type="binding site" evidence="1">
    <location>
        <position position="33"/>
    </location>
    <ligand>
        <name>Zn(2+)</name>
        <dbReference type="ChEBI" id="CHEBI:29105"/>
        <label>1</label>
    </ligand>
</feature>
<feature type="binding site" evidence="1">
    <location>
        <position position="34"/>
    </location>
    <ligand>
        <name>Zn(2+)</name>
        <dbReference type="ChEBI" id="CHEBI:29105"/>
        <label>1</label>
    </ligand>
</feature>
<feature type="binding site" evidence="1">
    <location>
        <position position="37"/>
    </location>
    <ligand>
        <name>Zn(2+)</name>
        <dbReference type="ChEBI" id="CHEBI:29105"/>
        <label>1</label>
    </ligand>
</feature>
<feature type="site" description="Essential for Tat translocation through the endosomal membrane" evidence="1">
    <location>
        <position position="11"/>
    </location>
</feature>
<feature type="modified residue" description="N6-acetyllysine; by host PCAF" evidence="1">
    <location>
        <position position="28"/>
    </location>
</feature>
<feature type="modified residue" description="N6-acetyllysine; by host EP300 and GCN5L2" evidence="1">
    <location>
        <position position="50"/>
    </location>
</feature>
<feature type="modified residue" description="N6-acetyllysine; by host EP300 and GCN5L2" evidence="1">
    <location>
        <position position="51"/>
    </location>
</feature>
<feature type="modified residue" description="Asymmetric dimethylarginine; by host PRMT6" evidence="1">
    <location>
        <position position="52"/>
    </location>
</feature>
<feature type="cross-link" description="Glycyl lysine isopeptide (Lys-Gly) (interchain with G-Cter in ubiquitin)" evidence="1">
    <location>
        <position position="72"/>
    </location>
</feature>
<organismHost>
    <name type="scientific">Pan</name>
    <name type="common">chimpanzees</name>
    <dbReference type="NCBI Taxonomy" id="9596"/>
</organismHost>
<comment type="function">
    <text evidence="1">Transcriptional activator that increases RNA Pol II processivity, thereby increasing the level of full-length viral transcripts. Recognizes a hairpin structure at the 5'-LTR of the nascent viral mRNAs referred to as the transactivation responsive RNA element (TAR) and recruits the cyclin T1-CDK9 complex (P-TEFb complex) that will in turn hyperphosphorylate the RNA polymerase II to allow efficient elongation. The CDK9 component of P-TEFb and other Tat-activated kinases hyperphosphorylate the C-terminus of RNA Pol II that becomes stabilized and much more processive. Other factors such as HTATSF1/Tat-SF1, SUPT5H/SPT5, and HTATIP2 are also important for Tat's function. Besides its effect on RNA Pol II processivity, Tat induces chromatin remodeling of proviral genes by recruiting the histone acetyltransferases (HATs) CREBBP, EP300 and PCAF to the chromatin. This also contributes to the increase in proviral transcription rate, especially when the provirus integrates in transcriptionally silent region of the host genome. To ensure maximal activation of the LTR, Tat mediates nuclear translocation of NF-kappa-B by interacting with host RELA. Through its interaction with host TBP, Tat may also modulate transcription initiation. Tat can reactivate a latently infected cell by penetrating in it and transactivating its LTR promoter. In the cytoplasm, Tat is thought to act as a translational activator of HIV-1 mRNAs.</text>
</comment>
<comment type="function">
    <text evidence="1">Extracellular circulating Tat can be endocytosed by surrounding uninfected cells via the binding to several surface receptors such as CD26, CXCR4, heparan sulfate proteoglycans (HSPG) or LDLR. Neurons are rarely infected, but they internalize Tat via their LDLR. Through its interaction with nuclear HATs, Tat is potentially able to control the acetylation-dependent cellular gene expression. Modulates the expression of many cellular genes involved in cell survival, proliferation or in coding for cytokines or cytokine receptors. Tat plays a role in T-cell and neurons apoptosis. Tat induced neurotoxicity and apoptosis probably contribute to neuroAIDS. Circulating Tat also acts as a chemokine-like and/or growth factor-like molecule that binds to specific receptors on the surface of the cells, affecting many cellular pathways. In the vascular system, Tat binds to ITGAV/ITGB3 and ITGA5/ITGB1 integrins dimers at the surface of endothelial cells and competes with bFGF for heparin-binding sites, leading to an excess of soluble bFGF.</text>
</comment>
<comment type="subunit">
    <text evidence="1">Interacts with host CCNT1. Associates with the P-TEFb complex composed at least of Tat, P-TEFb (CDK9 and CCNT1), TAR RNA, RNA Pol II. Recruits the HATs CREBBP, TAF1/TFIID, EP300, PCAF and GCN5L2. Interacts with host KAT5/Tip60; this interaction targets the latter to degradation. Interacts with the host deacetylase SIRT1. Interacts with host capping enzyme RNGTT; this interaction stimulates RNGTT. Binds to host KDR, and to the host integrins ITGAV/ITGB3 and ITGA5/ITGB1. Interacts with host KPNB1/importin beta-1 without previous binding to KPNA1/importin alpha-1. Interacts with EIF2AK2. Interacts with host nucleosome assembly protein NAP1L1; this interaction may be required for the transport of Tat within the nucleus, since the two proteins interact at the nuclear rim. Interacts with host C1QBP/SF2P32; this interaction involves lysine-acetylated Tat. Interacts with the host chemokine receptors CCR2, CCR3 and CXCR4. Interacts with host DPP4/CD26; this interaction may trigger an anti-proliferative effect. Interacts with host LDLR. Interacts with the host extracellular matrix metalloproteinase MMP1. Interacts with host PRMT6; this interaction mediates Tat's methylation. Interacts with, and is ubiquitinated by MDM2/Hdm2. Interacts with host PSMC3 and HTATIP2. Interacts with STAB1; this interaction may overcome SATB1-mediated repression of IL2 and IL2RA (interleukin) in T cells by binding to the same domain than HDAC1. Interacts (when acetylated) with human CDK13, thereby increasing HIV-1 mRNA splicing and promoting the production of the doubly spliced HIV-1 protein Nef. Interacts with host TBP; this interaction modulates the activity of transcriptional pre-initiation complex. Interacts with host RELA.</text>
</comment>
<comment type="subcellular location">
    <subcellularLocation>
        <location evidence="1">Host nucleus</location>
        <location evidence="1">Host nucleolus</location>
    </subcellularLocation>
    <subcellularLocation>
        <location evidence="1">Host cytoplasm</location>
    </subcellularLocation>
    <subcellularLocation>
        <location evidence="1">Secreted</location>
    </subcellularLocation>
    <text evidence="1">Probably localizes to both nuclear and nucleolar compartments. Nuclear localization is mediated through the interaction of the nuclear localization signal with importin KPNB1. Secretion occurs through a Golgi-independent pathway. Tat is released from infected cells to the extracellular space where it remains associated to the cell membrane, or is secreted into the cerebrospinal fluid and sera. Extracellular Tat can be endocytosed by surrounding uninfected cells via binding to several receptors depending on the cell type.</text>
</comment>
<comment type="domain">
    <text evidence="1">The cell attachment site mediates the interaction with ITGAV/ITGB3 and ITGA5/ITGB1 integrins, leading to vascular cell migration and invasion. This interaction also provides endothelial cells with the adhesion signal they require to grow in response to mitogens.</text>
</comment>
<comment type="domain">
    <text evidence="1">The Cys-rich region may bind 2 zinc ions. This region is involved in binding to KAT5.</text>
</comment>
<comment type="domain">
    <text evidence="1">The transactivation domain mediates the interaction with CCNT1, GCN5L2, and MDM2.</text>
</comment>
<comment type="domain">
    <text evidence="1">The Arg-rich RNA-binding region binds the TAR RNA. This region also mediates the nuclear localization through direct binding to KPNB1 and is involved in Tat's transfer across cell membranes (protein transduction). The same region is required for the interaction with EP300, PCAF, EIF2AK2 and KDR.</text>
</comment>
<comment type="PTM">
    <text evidence="1">Asymmetrical arginine methylation by host PRMT6 seems to diminish the transactivation capacity of Tat and affects the interaction with host CCNT1.</text>
</comment>
<comment type="PTM">
    <text evidence="1">Acetylation by EP300, CREBBP, GCN5L2/GCN5 and PCAF regulates the transactivation activity of Tat. EP300-mediated acetylation of Lys-50 promotes dissociation of Tat from the TAR RNA through the competitive binding to PCAF's bromodomain. In addition, the non-acetylated Tat's N-terminus can also interact with PCAF. PCAF-mediated acetylation of Lys-28 enhances Tat's binding to CCNT1. Lys-50 is deacetylated by SIRT1.</text>
</comment>
<comment type="PTM">
    <text evidence="1">Polyubiquitination by host MDM2 does not target Tat to degradation, but activates its transactivation function and fosters interaction with CCNT1 and TAR RNA.</text>
</comment>
<comment type="PTM">
    <text evidence="1">Phosphorylated by EIF2AK2 on serine and threonine residues adjacent to the basic region important for TAR RNA binding and function. Phosphorylation of Tat by EIF2AK2 is dependent on the prior activation of EIF2AK2 by dsRNA.</text>
</comment>
<comment type="miscellaneous">
    <text evidence="1">HIV-1 lineages are divided in three main groups, M (for Major), O (for Outlier), and N (for New, or Non-M, Non-O). The vast majority of strains found worldwide belong to the group M. Group O seems to be endemic to and largely confined to Cameroon and neighboring countries in West Central Africa, where these viruses represent a small minority of HIV-1 strains. The group N is represented by a limited number of isolates from Cameroonian persons. The group M is further subdivided in 9 clades or subtypes (A to D, F to H, J and K).</text>
</comment>
<comment type="similarity">
    <text evidence="1">Belongs to the lentiviruses Tat family.</text>
</comment>
<name>TAT_SIVCZ</name>
<reference key="1">
    <citation type="journal article" date="1990" name="Nature">
        <title>Genetic organization of a chimpanzee lentivirus related to HIV-1.</title>
        <authorList>
            <person name="Huet T."/>
            <person name="Cheynier R."/>
            <person name="Meyerhans A."/>
            <person name="Roelants G."/>
            <person name="Wain-Hobson S."/>
        </authorList>
    </citation>
    <scope>NUCLEOTIDE SEQUENCE [GENOMIC RNA]</scope>
</reference>
<sequence>MDPIDPDLEPWKHPGSQPRTVCNNCYCKACCYHCIYCFTKKGLGISYGRKKRTTRRRTAPAGSKNNQDSIPKQPLSQSRGNKEGSEKSTKEVASKTEADQ</sequence>
<gene>
    <name evidence="1" type="primary">tat</name>
</gene>
<protein>
    <recommendedName>
        <fullName evidence="1">Protein Tat</fullName>
    </recommendedName>
    <alternativeName>
        <fullName evidence="1">Transactivating regulatory protein</fullName>
    </alternativeName>
</protein>
<organism>
    <name type="scientific">Simian immunodeficiency virus (isolate CPZ GAB1)</name>
    <name type="common">SIV-cpz</name>
    <name type="synonym">Chimpanzee immunodeficiency virus</name>
    <dbReference type="NCBI Taxonomy" id="402771"/>
    <lineage>
        <taxon>Viruses</taxon>
        <taxon>Riboviria</taxon>
        <taxon>Pararnavirae</taxon>
        <taxon>Artverviricota</taxon>
        <taxon>Revtraviricetes</taxon>
        <taxon>Ortervirales</taxon>
        <taxon>Retroviridae</taxon>
        <taxon>Orthoretrovirinae</taxon>
        <taxon>Lentivirus</taxon>
        <taxon>Simian immunodeficiency virus</taxon>
    </lineage>
</organism>
<proteinExistence type="inferred from homology"/>
<dbReference type="EMBL" id="X52154">
    <property type="protein sequence ID" value="CAA36404.1"/>
    <property type="molecule type" value="Genomic_RNA"/>
</dbReference>
<dbReference type="PIR" id="S09987">
    <property type="entry name" value="TNLJSI"/>
</dbReference>
<dbReference type="SMR" id="P17285"/>
<dbReference type="Proteomes" id="UP000009153">
    <property type="component" value="Segment"/>
</dbReference>
<dbReference type="GO" id="GO:0005576">
    <property type="term" value="C:extracellular region"/>
    <property type="evidence" value="ECO:0007669"/>
    <property type="project" value="UniProtKB-SubCell"/>
</dbReference>
<dbReference type="GO" id="GO:0030430">
    <property type="term" value="C:host cell cytoplasm"/>
    <property type="evidence" value="ECO:0007669"/>
    <property type="project" value="UniProtKB-SubCell"/>
</dbReference>
<dbReference type="GO" id="GO:0044196">
    <property type="term" value="C:host cell nucleolus"/>
    <property type="evidence" value="ECO:0007669"/>
    <property type="project" value="UniProtKB-SubCell"/>
</dbReference>
<dbReference type="GO" id="GO:0042805">
    <property type="term" value="F:actinin binding"/>
    <property type="evidence" value="ECO:0007669"/>
    <property type="project" value="UniProtKB-UniRule"/>
</dbReference>
<dbReference type="GO" id="GO:0030332">
    <property type="term" value="F:cyclin binding"/>
    <property type="evidence" value="ECO:0007669"/>
    <property type="project" value="UniProtKB-UniRule"/>
</dbReference>
<dbReference type="GO" id="GO:0046872">
    <property type="term" value="F:metal ion binding"/>
    <property type="evidence" value="ECO:0007669"/>
    <property type="project" value="UniProtKB-UniRule"/>
</dbReference>
<dbReference type="GO" id="GO:0019904">
    <property type="term" value="F:protein domain specific binding"/>
    <property type="evidence" value="ECO:0007669"/>
    <property type="project" value="UniProtKB-UniRule"/>
</dbReference>
<dbReference type="GO" id="GO:0004865">
    <property type="term" value="F:protein serine/threonine phosphatase inhibitor activity"/>
    <property type="evidence" value="ECO:0007669"/>
    <property type="project" value="UniProtKB-KW"/>
</dbReference>
<dbReference type="GO" id="GO:0001070">
    <property type="term" value="F:RNA-binding transcription regulator activity"/>
    <property type="evidence" value="ECO:0007669"/>
    <property type="project" value="UniProtKB-UniRule"/>
</dbReference>
<dbReference type="GO" id="GO:1990970">
    <property type="term" value="F:trans-activation response element binding"/>
    <property type="evidence" value="ECO:0007669"/>
    <property type="project" value="UniProtKB-UniRule"/>
</dbReference>
<dbReference type="GO" id="GO:0006351">
    <property type="term" value="P:DNA-templated transcription"/>
    <property type="evidence" value="ECO:0007669"/>
    <property type="project" value="UniProtKB-UniRule"/>
</dbReference>
<dbReference type="GO" id="GO:0032968">
    <property type="term" value="P:positive regulation of transcription elongation by RNA polymerase II"/>
    <property type="evidence" value="ECO:0007669"/>
    <property type="project" value="UniProtKB-UniRule"/>
</dbReference>
<dbReference type="GO" id="GO:0050434">
    <property type="term" value="P:positive regulation of viral transcription"/>
    <property type="evidence" value="ECO:0007669"/>
    <property type="project" value="UniProtKB-UniRule"/>
</dbReference>
<dbReference type="GO" id="GO:0039525">
    <property type="term" value="P:symbiont-mediated perturbation of host chromatin organization"/>
    <property type="evidence" value="ECO:0007669"/>
    <property type="project" value="UniProtKB-UniRule"/>
</dbReference>
<dbReference type="GO" id="GO:0052170">
    <property type="term" value="P:symbiont-mediated suppression of host innate immune response"/>
    <property type="evidence" value="ECO:0007669"/>
    <property type="project" value="UniProtKB-KW"/>
</dbReference>
<dbReference type="GO" id="GO:0039606">
    <property type="term" value="P:symbiont-mediated suppression of host translation initiation"/>
    <property type="evidence" value="ECO:0007669"/>
    <property type="project" value="UniProtKB-KW"/>
</dbReference>
<dbReference type="GO" id="GO:0039502">
    <property type="term" value="P:symbiont-mediated suppression of host type I interferon-mediated signaling pathway"/>
    <property type="evidence" value="ECO:0007669"/>
    <property type="project" value="UniProtKB-UniRule"/>
</dbReference>
<dbReference type="Gene3D" id="4.10.20.10">
    <property type="entry name" value="Tat domain"/>
    <property type="match status" value="1"/>
</dbReference>
<dbReference type="HAMAP" id="MF_04079">
    <property type="entry name" value="HIV_TAT"/>
    <property type="match status" value="1"/>
</dbReference>
<dbReference type="InterPro" id="IPR001831">
    <property type="entry name" value="IV_Tat"/>
</dbReference>
<dbReference type="InterPro" id="IPR036963">
    <property type="entry name" value="Tat_dom_sf"/>
</dbReference>
<dbReference type="Pfam" id="PF00539">
    <property type="entry name" value="Tat"/>
    <property type="match status" value="1"/>
</dbReference>
<dbReference type="PRINTS" id="PR00055">
    <property type="entry name" value="HIVTATDOMAIN"/>
</dbReference>
<evidence type="ECO:0000255" key="1">
    <source>
        <dbReference type="HAMAP-Rule" id="MF_04079"/>
    </source>
</evidence>
<evidence type="ECO:0000256" key="2">
    <source>
        <dbReference type="SAM" id="MobiDB-lite"/>
    </source>
</evidence>
<keyword id="KW-0007">Acetylation</keyword>
<keyword id="KW-0010">Activator</keyword>
<keyword id="KW-0014">AIDS</keyword>
<keyword id="KW-0053">Apoptosis</keyword>
<keyword id="KW-1035">Host cytoplasm</keyword>
<keyword id="KW-1048">Host nucleus</keyword>
<keyword id="KW-0945">Host-virus interaction</keyword>
<keyword id="KW-1090">Inhibition of host innate immune response by virus</keyword>
<keyword id="KW-1114">Inhibition of host interferon signaling pathway by virus</keyword>
<keyword id="KW-0922">Interferon antiviral system evasion</keyword>
<keyword id="KW-1017">Isopeptide bond</keyword>
<keyword id="KW-0479">Metal-binding</keyword>
<keyword id="KW-0488">Methylation</keyword>
<keyword id="KW-1122">Modulation of host chromatin by virus</keyword>
<keyword id="KW-1126">Modulation of host PP1 activity by virus</keyword>
<keyword id="KW-0597">Phosphoprotein</keyword>
<keyword id="KW-1185">Reference proteome</keyword>
<keyword id="KW-0694">RNA-binding</keyword>
<keyword id="KW-0964">Secreted</keyword>
<keyword id="KW-0804">Transcription</keyword>
<keyword id="KW-0805">Transcription regulation</keyword>
<keyword id="KW-0832">Ubl conjugation</keyword>
<keyword id="KW-0899">Viral immunoevasion</keyword>
<keyword id="KW-0862">Zinc</keyword>
<accession>P17285</accession>